<reference key="1">
    <citation type="journal article" date="2007" name="PLoS Genet.">
        <title>Patterns and implications of gene gain and loss in the evolution of Prochlorococcus.</title>
        <authorList>
            <person name="Kettler G.C."/>
            <person name="Martiny A.C."/>
            <person name="Huang K."/>
            <person name="Zucker J."/>
            <person name="Coleman M.L."/>
            <person name="Rodrigue S."/>
            <person name="Chen F."/>
            <person name="Lapidus A."/>
            <person name="Ferriera S."/>
            <person name="Johnson J."/>
            <person name="Steglich C."/>
            <person name="Church G.M."/>
            <person name="Richardson P."/>
            <person name="Chisholm S.W."/>
        </authorList>
    </citation>
    <scope>NUCLEOTIDE SEQUENCE [LARGE SCALE GENOMIC DNA]</scope>
    <source>
        <strain>AS9601</strain>
    </source>
</reference>
<feature type="chain" id="PRO_0000354504" description="Large ribosomal subunit protein uL22">
    <location>
        <begin position="1"/>
        <end position="128"/>
    </location>
</feature>
<evidence type="ECO:0000255" key="1">
    <source>
        <dbReference type="HAMAP-Rule" id="MF_01331"/>
    </source>
</evidence>
<evidence type="ECO:0000305" key="2"/>
<sequence>MTKTPETTKKAIAHGNYVRGSASKVRRVLDQIRGRSYRDALIMLEFMPYRSTDPITKVLRSAVANAEHNLGMDPSTLVISSAWANSGPVMKRYRPRAQGRAFSIKKQTCHISISVESAPTETNAEVQN</sequence>
<accession>A2BTD2</accession>
<comment type="function">
    <text evidence="1">This protein binds specifically to 23S rRNA; its binding is stimulated by other ribosomal proteins, e.g. L4, L17, and L20. It is important during the early stages of 50S assembly. It makes multiple contacts with different domains of the 23S rRNA in the assembled 50S subunit and ribosome (By similarity).</text>
</comment>
<comment type="function">
    <text evidence="1">The globular domain of the protein is located near the polypeptide exit tunnel on the outside of the subunit, while an extended beta-hairpin is found that lines the wall of the exit tunnel in the center of the 70S ribosome.</text>
</comment>
<comment type="subunit">
    <text evidence="1">Part of the 50S ribosomal subunit.</text>
</comment>
<comment type="similarity">
    <text evidence="1">Belongs to the universal ribosomal protein uL22 family.</text>
</comment>
<dbReference type="EMBL" id="CP000551">
    <property type="protein sequence ID" value="ABM71043.1"/>
    <property type="molecule type" value="Genomic_DNA"/>
</dbReference>
<dbReference type="RefSeq" id="WP_011819166.1">
    <property type="nucleotide sequence ID" value="NC_008816.1"/>
</dbReference>
<dbReference type="SMR" id="A2BTD2"/>
<dbReference type="STRING" id="146891.A9601_17601"/>
<dbReference type="KEGG" id="pmb:A9601_17601"/>
<dbReference type="eggNOG" id="COG0091">
    <property type="taxonomic scope" value="Bacteria"/>
</dbReference>
<dbReference type="HOGENOM" id="CLU_083987_3_2_3"/>
<dbReference type="OrthoDB" id="9805969at2"/>
<dbReference type="Proteomes" id="UP000002590">
    <property type="component" value="Chromosome"/>
</dbReference>
<dbReference type="GO" id="GO:0022625">
    <property type="term" value="C:cytosolic large ribosomal subunit"/>
    <property type="evidence" value="ECO:0007669"/>
    <property type="project" value="TreeGrafter"/>
</dbReference>
<dbReference type="GO" id="GO:0019843">
    <property type="term" value="F:rRNA binding"/>
    <property type="evidence" value="ECO:0007669"/>
    <property type="project" value="UniProtKB-UniRule"/>
</dbReference>
<dbReference type="GO" id="GO:0003735">
    <property type="term" value="F:structural constituent of ribosome"/>
    <property type="evidence" value="ECO:0007669"/>
    <property type="project" value="InterPro"/>
</dbReference>
<dbReference type="GO" id="GO:0006412">
    <property type="term" value="P:translation"/>
    <property type="evidence" value="ECO:0007669"/>
    <property type="project" value="UniProtKB-UniRule"/>
</dbReference>
<dbReference type="CDD" id="cd00336">
    <property type="entry name" value="Ribosomal_L22"/>
    <property type="match status" value="1"/>
</dbReference>
<dbReference type="Gene3D" id="3.90.470.10">
    <property type="entry name" value="Ribosomal protein L22/L17"/>
    <property type="match status" value="1"/>
</dbReference>
<dbReference type="HAMAP" id="MF_01331_B">
    <property type="entry name" value="Ribosomal_uL22_B"/>
    <property type="match status" value="1"/>
</dbReference>
<dbReference type="InterPro" id="IPR001063">
    <property type="entry name" value="Ribosomal_uL22"/>
</dbReference>
<dbReference type="InterPro" id="IPR005727">
    <property type="entry name" value="Ribosomal_uL22_bac/chlpt-type"/>
</dbReference>
<dbReference type="InterPro" id="IPR047867">
    <property type="entry name" value="Ribosomal_uL22_bac/org-type"/>
</dbReference>
<dbReference type="InterPro" id="IPR018260">
    <property type="entry name" value="Ribosomal_uL22_CS"/>
</dbReference>
<dbReference type="InterPro" id="IPR036394">
    <property type="entry name" value="Ribosomal_uL22_sf"/>
</dbReference>
<dbReference type="NCBIfam" id="TIGR01044">
    <property type="entry name" value="rplV_bact"/>
    <property type="match status" value="1"/>
</dbReference>
<dbReference type="PANTHER" id="PTHR13501">
    <property type="entry name" value="CHLOROPLAST 50S RIBOSOMAL PROTEIN L22-RELATED"/>
    <property type="match status" value="1"/>
</dbReference>
<dbReference type="PANTHER" id="PTHR13501:SF8">
    <property type="entry name" value="LARGE RIBOSOMAL SUBUNIT PROTEIN UL22M"/>
    <property type="match status" value="1"/>
</dbReference>
<dbReference type="Pfam" id="PF00237">
    <property type="entry name" value="Ribosomal_L22"/>
    <property type="match status" value="1"/>
</dbReference>
<dbReference type="SUPFAM" id="SSF54843">
    <property type="entry name" value="Ribosomal protein L22"/>
    <property type="match status" value="1"/>
</dbReference>
<dbReference type="PROSITE" id="PS00464">
    <property type="entry name" value="RIBOSOMAL_L22"/>
    <property type="match status" value="1"/>
</dbReference>
<protein>
    <recommendedName>
        <fullName evidence="1">Large ribosomal subunit protein uL22</fullName>
    </recommendedName>
    <alternativeName>
        <fullName evidence="2">50S ribosomal protein L22</fullName>
    </alternativeName>
</protein>
<gene>
    <name evidence="1" type="primary">rplV</name>
    <name evidence="1" type="synonym">rpl22</name>
    <name type="ordered locus">A9601_17601</name>
</gene>
<keyword id="KW-0687">Ribonucleoprotein</keyword>
<keyword id="KW-0689">Ribosomal protein</keyword>
<keyword id="KW-0694">RNA-binding</keyword>
<keyword id="KW-0699">rRNA-binding</keyword>
<proteinExistence type="inferred from homology"/>
<organism>
    <name type="scientific">Prochlorococcus marinus (strain AS9601)</name>
    <dbReference type="NCBI Taxonomy" id="146891"/>
    <lineage>
        <taxon>Bacteria</taxon>
        <taxon>Bacillati</taxon>
        <taxon>Cyanobacteriota</taxon>
        <taxon>Cyanophyceae</taxon>
        <taxon>Synechococcales</taxon>
        <taxon>Prochlorococcaceae</taxon>
        <taxon>Prochlorococcus</taxon>
    </lineage>
</organism>
<name>RL22_PROMS</name>